<accession>Q6L2I0</accession>
<reference key="1">
    <citation type="journal article" date="2004" name="Proc. Natl. Acad. Sci. U.S.A.">
        <title>Genome sequence of Picrophilus torridus and its implications for life around pH 0.</title>
        <authorList>
            <person name="Fuetterer O."/>
            <person name="Angelov A."/>
            <person name="Liesegang H."/>
            <person name="Gottschalk G."/>
            <person name="Schleper C."/>
            <person name="Schepers B."/>
            <person name="Dock C."/>
            <person name="Antranikian G."/>
            <person name="Liebl W."/>
        </authorList>
    </citation>
    <scope>NUCLEOTIDE SEQUENCE [LARGE SCALE GENOMIC DNA]</scope>
    <source>
        <strain>ATCC 700027 / DSM 9790 / JCM 10055 / NBRC 100828 / KAW 2/3</strain>
    </source>
</reference>
<feature type="chain" id="PRO_0000326864" description="Acylphosphatase">
    <location>
        <begin position="1"/>
        <end position="81"/>
    </location>
</feature>
<feature type="domain" description="Acylphosphatase-like" evidence="1">
    <location>
        <begin position="1"/>
        <end position="81"/>
    </location>
</feature>
<feature type="active site" evidence="1">
    <location>
        <position position="14"/>
    </location>
</feature>
<feature type="active site" evidence="1">
    <location>
        <position position="32"/>
    </location>
</feature>
<evidence type="ECO:0000255" key="1">
    <source>
        <dbReference type="PROSITE-ProRule" id="PRU00520"/>
    </source>
</evidence>
<evidence type="ECO:0000305" key="2"/>
<organism>
    <name type="scientific">Picrophilus torridus (strain ATCC 700027 / DSM 9790 / JCM 10055 / NBRC 100828 / KAW 2/3)</name>
    <dbReference type="NCBI Taxonomy" id="1122961"/>
    <lineage>
        <taxon>Archaea</taxon>
        <taxon>Methanobacteriati</taxon>
        <taxon>Thermoplasmatota</taxon>
        <taxon>Thermoplasmata</taxon>
        <taxon>Thermoplasmatales</taxon>
        <taxon>Picrophilaceae</taxon>
        <taxon>Picrophilus</taxon>
    </lineage>
</organism>
<protein>
    <recommendedName>
        <fullName>Acylphosphatase</fullName>
        <ecNumber>3.6.1.7</ecNumber>
    </recommendedName>
    <alternativeName>
        <fullName>Acylphosphate phosphohydrolase</fullName>
    </alternativeName>
</protein>
<comment type="catalytic activity">
    <reaction>
        <text>an acyl phosphate + H2O = a carboxylate + phosphate + H(+)</text>
        <dbReference type="Rhea" id="RHEA:14965"/>
        <dbReference type="ChEBI" id="CHEBI:15377"/>
        <dbReference type="ChEBI" id="CHEBI:15378"/>
        <dbReference type="ChEBI" id="CHEBI:29067"/>
        <dbReference type="ChEBI" id="CHEBI:43474"/>
        <dbReference type="ChEBI" id="CHEBI:59918"/>
        <dbReference type="EC" id="3.6.1.7"/>
    </reaction>
</comment>
<comment type="similarity">
    <text evidence="2">Belongs to the acylphosphatase family.</text>
</comment>
<proteinExistence type="inferred from homology"/>
<dbReference type="EC" id="3.6.1.7"/>
<dbReference type="EMBL" id="AE017261">
    <property type="protein sequence ID" value="AAT42822.1"/>
    <property type="molecule type" value="Genomic_DNA"/>
</dbReference>
<dbReference type="RefSeq" id="WP_011177038.1">
    <property type="nucleotide sequence ID" value="NC_005877.1"/>
</dbReference>
<dbReference type="SMR" id="Q6L2I0"/>
<dbReference type="FunCoup" id="Q6L2I0">
    <property type="interactions" value="32"/>
</dbReference>
<dbReference type="STRING" id="263820.PTO0237"/>
<dbReference type="PaxDb" id="263820-PTO0237"/>
<dbReference type="GeneID" id="2845246"/>
<dbReference type="KEGG" id="pto:PTO0237"/>
<dbReference type="eggNOG" id="arCOG01674">
    <property type="taxonomic scope" value="Archaea"/>
</dbReference>
<dbReference type="HOGENOM" id="CLU_141932_1_2_2"/>
<dbReference type="InParanoid" id="Q6L2I0"/>
<dbReference type="OrthoDB" id="6643at2157"/>
<dbReference type="Proteomes" id="UP000000438">
    <property type="component" value="Chromosome"/>
</dbReference>
<dbReference type="GO" id="GO:0003998">
    <property type="term" value="F:acylphosphatase activity"/>
    <property type="evidence" value="ECO:0007669"/>
    <property type="project" value="UniProtKB-EC"/>
</dbReference>
<dbReference type="Gene3D" id="3.30.70.100">
    <property type="match status" value="1"/>
</dbReference>
<dbReference type="InterPro" id="IPR020456">
    <property type="entry name" value="Acylphosphatase"/>
</dbReference>
<dbReference type="InterPro" id="IPR001792">
    <property type="entry name" value="Acylphosphatase-like_dom"/>
</dbReference>
<dbReference type="InterPro" id="IPR036046">
    <property type="entry name" value="Acylphosphatase-like_dom_sf"/>
</dbReference>
<dbReference type="PANTHER" id="PTHR47268">
    <property type="entry name" value="ACYLPHOSPHATASE"/>
    <property type="match status" value="1"/>
</dbReference>
<dbReference type="PANTHER" id="PTHR47268:SF4">
    <property type="entry name" value="ACYLPHOSPHATASE"/>
    <property type="match status" value="1"/>
</dbReference>
<dbReference type="Pfam" id="PF00708">
    <property type="entry name" value="Acylphosphatase"/>
    <property type="match status" value="1"/>
</dbReference>
<dbReference type="SUPFAM" id="SSF54975">
    <property type="entry name" value="Acylphosphatase/BLUF domain-like"/>
    <property type="match status" value="1"/>
</dbReference>
<dbReference type="PROSITE" id="PS51160">
    <property type="entry name" value="ACYLPHOSPHATASE_3"/>
    <property type="match status" value="1"/>
</dbReference>
<keyword id="KW-0378">Hydrolase</keyword>
<sequence length="81" mass="9510">MYIFHGRVQGIGLRARTYSMAKSLGLSGYIKNRDDGTVEAVFQGDEEKIKRIIEYIKGIAYIEKIDYFDDDVKYNDFQIRY</sequence>
<gene>
    <name type="primary">acyP</name>
    <name type="ordered locus">PTO0237</name>
</gene>
<name>ACYP_PICTO</name>